<keyword id="KW-0025">Alternative splicing</keyword>
<keyword id="KW-1003">Cell membrane</keyword>
<keyword id="KW-1015">Disulfide bond</keyword>
<keyword id="KW-0325">Glycoprotein</keyword>
<keyword id="KW-0472">Membrane</keyword>
<keyword id="KW-0597">Phosphoprotein</keyword>
<keyword id="KW-1185">Reference proteome</keyword>
<keyword id="KW-0732">Signal</keyword>
<keyword id="KW-0812">Transmembrane</keyword>
<keyword id="KW-1133">Transmembrane helix</keyword>
<protein>
    <recommendedName>
        <fullName evidence="9">Endosome/lysosome-associated apoptosis and autophagy regulator family member 2</fullName>
    </recommendedName>
    <alternativeName>
        <fullName evidence="8">Estrogen-induced gene 121-like protein</fullName>
    </alternativeName>
</protein>
<evidence type="ECO:0000250" key="1"/>
<evidence type="ECO:0000250" key="2">
    <source>
        <dbReference type="UniProtKB" id="A8MWY0"/>
    </source>
</evidence>
<evidence type="ECO:0000250" key="3">
    <source>
        <dbReference type="UniProtKB" id="Q6DDW2"/>
    </source>
</evidence>
<evidence type="ECO:0000255" key="4"/>
<evidence type="ECO:0000255" key="5">
    <source>
        <dbReference type="PROSITE-ProRule" id="PRU01262"/>
    </source>
</evidence>
<evidence type="ECO:0000269" key="6">
    <source>
    </source>
</evidence>
<evidence type="ECO:0000303" key="7">
    <source>
    </source>
</evidence>
<evidence type="ECO:0000303" key="8">
    <source>
    </source>
</evidence>
<evidence type="ECO:0000305" key="9"/>
<evidence type="ECO:0000312" key="10">
    <source>
        <dbReference type="MGI" id="MGI:2443264"/>
    </source>
</evidence>
<reference key="1">
    <citation type="journal article" date="2005" name="Science">
        <title>The transcriptional landscape of the mammalian genome.</title>
        <authorList>
            <person name="Carninci P."/>
            <person name="Kasukawa T."/>
            <person name="Katayama S."/>
            <person name="Gough J."/>
            <person name="Frith M.C."/>
            <person name="Maeda N."/>
            <person name="Oyama R."/>
            <person name="Ravasi T."/>
            <person name="Lenhard B."/>
            <person name="Wells C."/>
            <person name="Kodzius R."/>
            <person name="Shimokawa K."/>
            <person name="Bajic V.B."/>
            <person name="Brenner S.E."/>
            <person name="Batalov S."/>
            <person name="Forrest A.R."/>
            <person name="Zavolan M."/>
            <person name="Davis M.J."/>
            <person name="Wilming L.G."/>
            <person name="Aidinis V."/>
            <person name="Allen J.E."/>
            <person name="Ambesi-Impiombato A."/>
            <person name="Apweiler R."/>
            <person name="Aturaliya R.N."/>
            <person name="Bailey T.L."/>
            <person name="Bansal M."/>
            <person name="Baxter L."/>
            <person name="Beisel K.W."/>
            <person name="Bersano T."/>
            <person name="Bono H."/>
            <person name="Chalk A.M."/>
            <person name="Chiu K.P."/>
            <person name="Choudhary V."/>
            <person name="Christoffels A."/>
            <person name="Clutterbuck D.R."/>
            <person name="Crowe M.L."/>
            <person name="Dalla E."/>
            <person name="Dalrymple B.P."/>
            <person name="de Bono B."/>
            <person name="Della Gatta G."/>
            <person name="di Bernardo D."/>
            <person name="Down T."/>
            <person name="Engstrom P."/>
            <person name="Fagiolini M."/>
            <person name="Faulkner G."/>
            <person name="Fletcher C.F."/>
            <person name="Fukushima T."/>
            <person name="Furuno M."/>
            <person name="Futaki S."/>
            <person name="Gariboldi M."/>
            <person name="Georgii-Hemming P."/>
            <person name="Gingeras T.R."/>
            <person name="Gojobori T."/>
            <person name="Green R.E."/>
            <person name="Gustincich S."/>
            <person name="Harbers M."/>
            <person name="Hayashi Y."/>
            <person name="Hensch T.K."/>
            <person name="Hirokawa N."/>
            <person name="Hill D."/>
            <person name="Huminiecki L."/>
            <person name="Iacono M."/>
            <person name="Ikeo K."/>
            <person name="Iwama A."/>
            <person name="Ishikawa T."/>
            <person name="Jakt M."/>
            <person name="Kanapin A."/>
            <person name="Katoh M."/>
            <person name="Kawasawa Y."/>
            <person name="Kelso J."/>
            <person name="Kitamura H."/>
            <person name="Kitano H."/>
            <person name="Kollias G."/>
            <person name="Krishnan S.P."/>
            <person name="Kruger A."/>
            <person name="Kummerfeld S.K."/>
            <person name="Kurochkin I.V."/>
            <person name="Lareau L.F."/>
            <person name="Lazarevic D."/>
            <person name="Lipovich L."/>
            <person name="Liu J."/>
            <person name="Liuni S."/>
            <person name="McWilliam S."/>
            <person name="Madan Babu M."/>
            <person name="Madera M."/>
            <person name="Marchionni L."/>
            <person name="Matsuda H."/>
            <person name="Matsuzawa S."/>
            <person name="Miki H."/>
            <person name="Mignone F."/>
            <person name="Miyake S."/>
            <person name="Morris K."/>
            <person name="Mottagui-Tabar S."/>
            <person name="Mulder N."/>
            <person name="Nakano N."/>
            <person name="Nakauchi H."/>
            <person name="Ng P."/>
            <person name="Nilsson R."/>
            <person name="Nishiguchi S."/>
            <person name="Nishikawa S."/>
            <person name="Nori F."/>
            <person name="Ohara O."/>
            <person name="Okazaki Y."/>
            <person name="Orlando V."/>
            <person name="Pang K.C."/>
            <person name="Pavan W.J."/>
            <person name="Pavesi G."/>
            <person name="Pesole G."/>
            <person name="Petrovsky N."/>
            <person name="Piazza S."/>
            <person name="Reed J."/>
            <person name="Reid J.F."/>
            <person name="Ring B.Z."/>
            <person name="Ringwald M."/>
            <person name="Rost B."/>
            <person name="Ruan Y."/>
            <person name="Salzberg S.L."/>
            <person name="Sandelin A."/>
            <person name="Schneider C."/>
            <person name="Schoenbach C."/>
            <person name="Sekiguchi K."/>
            <person name="Semple C.A."/>
            <person name="Seno S."/>
            <person name="Sessa L."/>
            <person name="Sheng Y."/>
            <person name="Shibata Y."/>
            <person name="Shimada H."/>
            <person name="Shimada K."/>
            <person name="Silva D."/>
            <person name="Sinclair B."/>
            <person name="Sperling S."/>
            <person name="Stupka E."/>
            <person name="Sugiura K."/>
            <person name="Sultana R."/>
            <person name="Takenaka Y."/>
            <person name="Taki K."/>
            <person name="Tammoja K."/>
            <person name="Tan S.L."/>
            <person name="Tang S."/>
            <person name="Taylor M.S."/>
            <person name="Tegner J."/>
            <person name="Teichmann S.A."/>
            <person name="Ueda H.R."/>
            <person name="van Nimwegen E."/>
            <person name="Verardo R."/>
            <person name="Wei C.L."/>
            <person name="Yagi K."/>
            <person name="Yamanishi H."/>
            <person name="Zabarovsky E."/>
            <person name="Zhu S."/>
            <person name="Zimmer A."/>
            <person name="Hide W."/>
            <person name="Bult C."/>
            <person name="Grimmond S.M."/>
            <person name="Teasdale R.D."/>
            <person name="Liu E.T."/>
            <person name="Brusic V."/>
            <person name="Quackenbush J."/>
            <person name="Wahlestedt C."/>
            <person name="Mattick J.S."/>
            <person name="Hume D.A."/>
            <person name="Kai C."/>
            <person name="Sasaki D."/>
            <person name="Tomaru Y."/>
            <person name="Fukuda S."/>
            <person name="Kanamori-Katayama M."/>
            <person name="Suzuki M."/>
            <person name="Aoki J."/>
            <person name="Arakawa T."/>
            <person name="Iida J."/>
            <person name="Imamura K."/>
            <person name="Itoh M."/>
            <person name="Kato T."/>
            <person name="Kawaji H."/>
            <person name="Kawagashira N."/>
            <person name="Kawashima T."/>
            <person name="Kojima M."/>
            <person name="Kondo S."/>
            <person name="Konno H."/>
            <person name="Nakano K."/>
            <person name="Ninomiya N."/>
            <person name="Nishio T."/>
            <person name="Okada M."/>
            <person name="Plessy C."/>
            <person name="Shibata K."/>
            <person name="Shiraki T."/>
            <person name="Suzuki S."/>
            <person name="Tagami M."/>
            <person name="Waki K."/>
            <person name="Watahiki A."/>
            <person name="Okamura-Oho Y."/>
            <person name="Suzuki H."/>
            <person name="Kawai J."/>
            <person name="Hayashizaki Y."/>
        </authorList>
    </citation>
    <scope>NUCLEOTIDE SEQUENCE [LARGE SCALE MRNA] (ISOFORMS 1; 2; 3; 4; 5; 6 AND 7)</scope>
    <source>
        <strain>C57BL/6J</strain>
        <tissue>Cerebellum</tissue>
        <tissue>Corpora quadrigemina</tissue>
        <tissue>Diencephalon</tissue>
        <tissue>Medulla oblongata</tissue>
        <tissue>Pituitary</tissue>
        <tissue>Spinal cord</tissue>
    </source>
</reference>
<reference key="2">
    <citation type="journal article" date="2004" name="Genome Res.">
        <title>The status, quality, and expansion of the NIH full-length cDNA project: the Mammalian Gene Collection (MGC).</title>
        <authorList>
            <consortium name="The MGC Project Team"/>
        </authorList>
    </citation>
    <scope>NUCLEOTIDE SEQUENCE [LARGE SCALE MRNA] (ISOFORM 1)</scope>
    <source>
        <tissue>Brain</tissue>
    </source>
</reference>
<reference key="3">
    <citation type="journal article" date="2010" name="Cell">
        <title>A tissue-specific atlas of mouse protein phosphorylation and expression.</title>
        <authorList>
            <person name="Huttlin E.L."/>
            <person name="Jedrychowski M.P."/>
            <person name="Elias J.E."/>
            <person name="Goswami T."/>
            <person name="Rad R."/>
            <person name="Beausoleil S.A."/>
            <person name="Villen J."/>
            <person name="Haas W."/>
            <person name="Sowa M.E."/>
            <person name="Gygi S.P."/>
        </authorList>
    </citation>
    <scope>IDENTIFICATION BY MASS SPECTROMETRY [LARGE SCALE ANALYSIS]</scope>
    <source>
        <tissue>Brain</tissue>
    </source>
</reference>
<reference key="4">
    <citation type="journal article" date="2011" name="J. Biol. Chem.">
        <title>A transmembrane protein EIG121L is required for epidermal differentiation during early embryonic development.</title>
        <authorList>
            <person name="Araki T."/>
            <person name="Kusakabe M."/>
            <person name="Nishida E."/>
        </authorList>
    </citation>
    <scope>FUNCTION</scope>
</reference>
<accession>Q3UZV7</accession>
<accession>Q8BJM9</accession>
<accession>Q8BJN9</accession>
<accession>Q8BJT7</accession>
<accession>Q8BKX9</accession>
<accession>Q8BL89</accession>
<accession>Q8BLT1</accession>
<accession>Q8BM91</accession>
<sequence>MLLLTLRRAKGRDRGRPAGGPRRALSLPWSPAWICCWALAGCQAVWAGDSSSSGRPLPACQEKDYHFEYTECDSTGSRWRVAIPNSAVDCSGLPDPVKGKECTFSCASGEYLEMKNQVCSKCVEGTYSLGSGIKFDEWDELPAGFSNVATFMDTVVGPSDSRPDGCNNSSWLPRGNYIESNRDDCTVSLIYAVHLKKSGYVFFEYQYVDNNIFFEFFIQNDQCQEMDATTDKWVKLTDNGEWGSHSVMLKSGTNILYWRTTGILMGSKAVKPVLVKNITIEGVAYTSECFPCKPGTFSNKPGSFNCQMCPRNTYSEKGAKECIRCKEDSQFSEEGASECVDRPPCTTKDYFQIHTPCDEEGKTQIMYKWIEPKICREDLTDAIRLPPSGEKKDCPPCNPGFYNNGSSSCHPCPPGTFSDGTKECKSCPAGTEPALGFEYKWWNVLPANMKTSCFNVGNSKCDGMNGWEVAGDHIRSGAGGSDNDYLILNLHIPGFKPPTSMTGATGSELGRITFVFETLCSADCVLYFMVDINRKSTNVVESWGGTKEKQAYTHVIFKNATFTFTWAFQRTNQGQDNRRFINDVVKIYSITATNAVDGVAASCRACALGSEQSASSCVPCPPGHYIEKETNQCKECPADTYLSIHQVYGKEACIPCGPGSKSTQDHSLCYSDCFFYHEKENQTLHYDFRNLSSVGSLMNGPSFTSKGTKYFHFFNISLCGHEGRKMALCTNNISDFTVKEMVTGSDDYTNLVGAFVCQSTIIPSESKGFRAALSSQSIILADMFLGVTVDTALQNVNIKEDMFPVSPSQVPDVHFFYKSSTATTSCINGRSTAVKMRCNPMRPGAGVISVPSKCPAGTCDGCTFYFLWESAEACPLCTEHDFHEIEGACKRGLQEILYVWNEPKWCIKGISLPEKKLSTCETVDFWLKVGAGVGAFTAVLLVALTCYFWKKNQKLEYKYSKLVMTTNSKECELPAADSCAIMEGEDNEEDVVYSNKQSLLGKLKSLATKEKDDHFESVQLKSSRCPNI</sequence>
<feature type="signal peptide" evidence="4">
    <location>
        <begin position="1"/>
        <end position="47"/>
    </location>
</feature>
<feature type="chain" id="PRO_0000333799" description="Endosome/lysosome-associated apoptosis and autophagy regulator family member 2">
    <location>
        <begin position="48"/>
        <end position="1028"/>
    </location>
</feature>
<feature type="topological domain" description="Extracellular" evidence="4">
    <location>
        <begin position="48"/>
        <end position="928"/>
    </location>
</feature>
<feature type="transmembrane region" description="Helical" evidence="4">
    <location>
        <begin position="929"/>
        <end position="949"/>
    </location>
</feature>
<feature type="topological domain" description="Cytoplasmic" evidence="4">
    <location>
        <begin position="950"/>
        <end position="1028"/>
    </location>
</feature>
<feature type="domain" description="MRH" evidence="5">
    <location>
        <begin position="671"/>
        <end position="876"/>
    </location>
</feature>
<feature type="modified residue" description="Phosphoserine" evidence="2">
    <location>
        <position position="1017"/>
    </location>
</feature>
<feature type="glycosylation site" description="N-linked (GlcNAc...) asparagine" evidence="4">
    <location>
        <position position="168"/>
    </location>
</feature>
<feature type="glycosylation site" description="N-linked (GlcNAc...) asparagine" evidence="4">
    <location>
        <position position="404"/>
    </location>
</feature>
<feature type="glycosylation site" description="N-linked (GlcNAc...) asparagine" evidence="4">
    <location>
        <position position="690"/>
    </location>
</feature>
<feature type="disulfide bond" evidence="1">
    <location>
        <begin position="292"/>
        <end position="309"/>
    </location>
</feature>
<feature type="disulfide bond" evidence="1">
    <location>
        <begin position="322"/>
        <end position="345"/>
    </location>
</feature>
<feature type="disulfide bond" evidence="1">
    <location>
        <begin position="325"/>
        <end position="357"/>
    </location>
</feature>
<feature type="disulfide bond" evidence="5">
    <location>
        <begin position="673"/>
        <end position="719"/>
    </location>
</feature>
<feature type="disulfide bond" evidence="5">
    <location>
        <begin position="729"/>
        <end position="757"/>
    </location>
</feature>
<feature type="disulfide bond" evidence="5">
    <location>
        <begin position="826"/>
        <end position="862"/>
    </location>
</feature>
<feature type="disulfide bond" evidence="5">
    <location>
        <begin position="838"/>
        <end position="874"/>
    </location>
</feature>
<feature type="splice variant" id="VSP_033531" description="In isoform 3 and isoform 5." evidence="7">
    <location>
        <begin position="1"/>
        <end position="113"/>
    </location>
</feature>
<feature type="splice variant" id="VSP_033532" description="In isoform 4." evidence="7">
    <original>YVDNNIFFEFFIQNDQ</original>
    <variation>FRMTSARRWMPPQTSG</variation>
    <location>
        <begin position="207"/>
        <end position="222"/>
    </location>
</feature>
<feature type="splice variant" id="VSP_033533" description="In isoform 6." evidence="7">
    <location>
        <begin position="218"/>
        <end position="1009"/>
    </location>
</feature>
<feature type="splice variant" id="VSP_033534" description="In isoform 7." evidence="7">
    <original>IQNDQC</original>
    <variation>VRLFIF</variation>
    <location>
        <begin position="218"/>
        <end position="223"/>
    </location>
</feature>
<feature type="splice variant" id="VSP_033535" description="In isoform 4." evidence="7">
    <location>
        <begin position="223"/>
        <end position="1028"/>
    </location>
</feature>
<feature type="splice variant" id="VSP_033536" description="In isoform 7." evidence="7">
    <location>
        <begin position="224"/>
        <end position="1028"/>
    </location>
</feature>
<feature type="splice variant" id="VSP_033537" description="In isoform 5." evidence="7">
    <original>NRRFINDV</original>
    <variation>MPLFLLSF</variation>
    <location>
        <begin position="577"/>
        <end position="584"/>
    </location>
</feature>
<feature type="splice variant" id="VSP_033538" description="In isoform 5." evidence="7">
    <location>
        <begin position="585"/>
        <end position="1028"/>
    </location>
</feature>
<feature type="splice variant" id="VSP_033539" description="In isoform 2 and isoform 3." evidence="7">
    <original>EKDDHFESVQLKSSRCPNI</original>
    <variation>VRADF</variation>
    <location>
        <begin position="1010"/>
        <end position="1028"/>
    </location>
</feature>
<feature type="sequence conflict" description="In Ref. 1; BAC28686." evidence="9" ref="1">
    <original>P</original>
    <variation>R</variation>
    <location>
        <position position="310"/>
    </location>
</feature>
<feature type="sequence conflict" description="In Ref. 1; BAC28686." evidence="9" ref="1">
    <original>C</original>
    <variation>W</variation>
    <location>
        <position position="620"/>
    </location>
</feature>
<proteinExistence type="evidence at protein level"/>
<dbReference type="EMBL" id="AK034358">
    <property type="protein sequence ID" value="BAC28686.1"/>
    <property type="molecule type" value="mRNA"/>
</dbReference>
<dbReference type="EMBL" id="AK043026">
    <property type="protein sequence ID" value="BAC31438.1"/>
    <property type="molecule type" value="mRNA"/>
</dbReference>
<dbReference type="EMBL" id="AK045969">
    <property type="protein sequence ID" value="BAC32552.1"/>
    <property type="molecule type" value="mRNA"/>
</dbReference>
<dbReference type="EMBL" id="AK048738">
    <property type="protein sequence ID" value="BAC33441.1"/>
    <property type="status" value="ALT_SEQ"/>
    <property type="molecule type" value="mRNA"/>
</dbReference>
<dbReference type="EMBL" id="AK079644">
    <property type="protein sequence ID" value="BAC37713.1"/>
    <property type="molecule type" value="mRNA"/>
</dbReference>
<dbReference type="EMBL" id="AK081041">
    <property type="protein sequence ID" value="BAC38120.1"/>
    <property type="molecule type" value="mRNA"/>
</dbReference>
<dbReference type="EMBL" id="AK082474">
    <property type="protein sequence ID" value="BAC38502.1"/>
    <property type="molecule type" value="mRNA"/>
</dbReference>
<dbReference type="EMBL" id="AK133610">
    <property type="protein sequence ID" value="BAE21748.1"/>
    <property type="molecule type" value="mRNA"/>
</dbReference>
<dbReference type="EMBL" id="AK161902">
    <property type="protein sequence ID" value="BAE36628.1"/>
    <property type="molecule type" value="mRNA"/>
</dbReference>
<dbReference type="EMBL" id="AK165601">
    <property type="protein sequence ID" value="BAE38286.1"/>
    <property type="molecule type" value="mRNA"/>
</dbReference>
<dbReference type="EMBL" id="BC132290">
    <property type="protein sequence ID" value="AAI32291.1"/>
    <property type="molecule type" value="mRNA"/>
</dbReference>
<dbReference type="CCDS" id="CCDS19089.1">
    <molecule id="Q3UZV7-1"/>
</dbReference>
<dbReference type="CCDS" id="CCDS89878.1">
    <molecule id="Q3UZV7-2"/>
</dbReference>
<dbReference type="RefSeq" id="NP_001346813.1">
    <molecule id="Q3UZV7-2"/>
    <property type="nucleotide sequence ID" value="NM_001359884.1"/>
</dbReference>
<dbReference type="RefSeq" id="NP_001346815.1">
    <molecule id="Q3UZV7-3"/>
    <property type="nucleotide sequence ID" value="NM_001359886.1"/>
</dbReference>
<dbReference type="RefSeq" id="NP_001346816.1">
    <molecule id="Q3UZV7-7"/>
    <property type="nucleotide sequence ID" value="NM_001359887.1"/>
</dbReference>
<dbReference type="RefSeq" id="NP_766294.2">
    <molecule id="Q3UZV7-1"/>
    <property type="nucleotide sequence ID" value="NM_172706.4"/>
</dbReference>
<dbReference type="BioGRID" id="231072">
    <property type="interactions" value="3"/>
</dbReference>
<dbReference type="FunCoup" id="Q3UZV7">
    <property type="interactions" value="1045"/>
</dbReference>
<dbReference type="STRING" id="10090.ENSMUSP00000069165"/>
<dbReference type="GlyConnect" id="2813">
    <property type="glycosylation" value="6 N-Linked glycans (3 sites)"/>
</dbReference>
<dbReference type="GlyCosmos" id="Q3UZV7">
    <property type="glycosylation" value="5 sites, 6 glycans"/>
</dbReference>
<dbReference type="GlyGen" id="Q3UZV7">
    <property type="glycosylation" value="7 sites, 11 N-linked glycans (6 sites)"/>
</dbReference>
<dbReference type="iPTMnet" id="Q3UZV7"/>
<dbReference type="PhosphoSitePlus" id="Q3UZV7"/>
<dbReference type="PaxDb" id="10090-ENSMUSP00000069165"/>
<dbReference type="PeptideAtlas" id="Q3UZV7"/>
<dbReference type="Antibodypedia" id="48884">
    <property type="antibodies" value="101 antibodies from 17 providers"/>
</dbReference>
<dbReference type="DNASU" id="231014"/>
<dbReference type="Ensembl" id="ENSMUST00000069538.14">
    <molecule id="Q3UZV7-1"/>
    <property type="protein sequence ID" value="ENSMUSP00000069165.8"/>
    <property type="gene ID" value="ENSMUSG00000056004.17"/>
</dbReference>
<dbReference type="Ensembl" id="ENSMUST00000115348.9">
    <molecule id="Q3UZV7-6"/>
    <property type="protein sequence ID" value="ENSMUSP00000111005.3"/>
    <property type="gene ID" value="ENSMUSG00000056004.17"/>
</dbReference>
<dbReference type="Ensembl" id="ENSMUST00000134991.8">
    <molecule id="Q3UZV7-2"/>
    <property type="protein sequence ID" value="ENSMUSP00000121757.2"/>
    <property type="gene ID" value="ENSMUSG00000056004.17"/>
</dbReference>
<dbReference type="Ensembl" id="ENSMUST00000154662.8">
    <molecule id="Q3UZV7-4"/>
    <property type="protein sequence ID" value="ENSMUSP00000116026.2"/>
    <property type="gene ID" value="ENSMUSG00000056004.17"/>
</dbReference>
<dbReference type="GeneID" id="231014"/>
<dbReference type="KEGG" id="mmu:231014"/>
<dbReference type="UCSC" id="uc008wlh.1">
    <molecule id="Q3UZV7-7"/>
    <property type="organism name" value="mouse"/>
</dbReference>
<dbReference type="UCSC" id="uc008wli.1">
    <molecule id="Q3UZV7-2"/>
    <property type="organism name" value="mouse"/>
</dbReference>
<dbReference type="UCSC" id="uc008wlj.1">
    <molecule id="Q3UZV7-3"/>
    <property type="organism name" value="mouse"/>
</dbReference>
<dbReference type="UCSC" id="uc008wlk.1">
    <molecule id="Q3UZV7-1"/>
    <property type="organism name" value="mouse"/>
</dbReference>
<dbReference type="UCSC" id="uc012dse.1">
    <molecule id="Q3UZV7-6"/>
    <property type="organism name" value="mouse"/>
</dbReference>
<dbReference type="AGR" id="MGI:2443264"/>
<dbReference type="CTD" id="222223"/>
<dbReference type="MGI" id="MGI:2443264">
    <property type="gene designation" value="Elapor2"/>
</dbReference>
<dbReference type="VEuPathDB" id="HostDB:ENSMUSG00000056004"/>
<dbReference type="eggNOG" id="KOG1217">
    <property type="taxonomic scope" value="Eukaryota"/>
</dbReference>
<dbReference type="GeneTree" id="ENSGT00940000154983"/>
<dbReference type="HOGENOM" id="CLU_005066_0_0_1"/>
<dbReference type="InParanoid" id="Q3UZV7"/>
<dbReference type="OMA" id="CEYISED"/>
<dbReference type="OrthoDB" id="439917at2759"/>
<dbReference type="PhylomeDB" id="Q3UZV7"/>
<dbReference type="TreeFam" id="TF315906"/>
<dbReference type="BioGRID-ORCS" id="231014">
    <property type="hits" value="1 hit in 77 CRISPR screens"/>
</dbReference>
<dbReference type="PRO" id="PR:Q3UZV7"/>
<dbReference type="Proteomes" id="UP000000589">
    <property type="component" value="Chromosome 5"/>
</dbReference>
<dbReference type="RNAct" id="Q3UZV7">
    <property type="molecule type" value="protein"/>
</dbReference>
<dbReference type="Bgee" id="ENSMUSG00000056004">
    <property type="expression patterns" value="Expressed in primary oocyte and 113 other cell types or tissues"/>
</dbReference>
<dbReference type="ExpressionAtlas" id="Q3UZV7">
    <property type="expression patterns" value="baseline and differential"/>
</dbReference>
<dbReference type="GO" id="GO:0005886">
    <property type="term" value="C:plasma membrane"/>
    <property type="evidence" value="ECO:0000250"/>
    <property type="project" value="UniProtKB"/>
</dbReference>
<dbReference type="GO" id="GO:0070700">
    <property type="term" value="F:BMP receptor binding"/>
    <property type="evidence" value="ECO:0000250"/>
    <property type="project" value="UniProtKB"/>
</dbReference>
<dbReference type="GO" id="GO:0051961">
    <property type="term" value="P:negative regulation of nervous system development"/>
    <property type="evidence" value="ECO:0000250"/>
    <property type="project" value="UniProtKB"/>
</dbReference>
<dbReference type="GO" id="GO:0030513">
    <property type="term" value="P:positive regulation of BMP signaling pathway"/>
    <property type="evidence" value="ECO:0000314"/>
    <property type="project" value="UniProtKB"/>
</dbReference>
<dbReference type="GO" id="GO:0045684">
    <property type="term" value="P:positive regulation of epidermis development"/>
    <property type="evidence" value="ECO:0000250"/>
    <property type="project" value="UniProtKB"/>
</dbReference>
<dbReference type="Gene3D" id="2.10.50.10">
    <property type="entry name" value="Tumor Necrosis Factor Receptor, subunit A, domain 2"/>
    <property type="match status" value="3"/>
</dbReference>
<dbReference type="InterPro" id="IPR056609">
    <property type="entry name" value="Elapor1-like_3rd"/>
</dbReference>
<dbReference type="InterPro" id="IPR039181">
    <property type="entry name" value="Elapor1/2"/>
</dbReference>
<dbReference type="InterPro" id="IPR056606">
    <property type="entry name" value="Elapor1/2_C"/>
</dbReference>
<dbReference type="InterPro" id="IPR056608">
    <property type="entry name" value="Elapor1/2_GBD"/>
</dbReference>
<dbReference type="InterPro" id="IPR056607">
    <property type="entry name" value="Elapor1/2_MRH"/>
</dbReference>
<dbReference type="InterPro" id="IPR056610">
    <property type="entry name" value="Elapor1/2_TNFR-like"/>
</dbReference>
<dbReference type="InterPro" id="IPR009030">
    <property type="entry name" value="Growth_fac_rcpt_cys_sf"/>
</dbReference>
<dbReference type="InterPro" id="IPR009011">
    <property type="entry name" value="Man6P_isomerase_rcpt-bd_dom_sf"/>
</dbReference>
<dbReference type="InterPro" id="IPR044865">
    <property type="entry name" value="MRH_dom"/>
</dbReference>
<dbReference type="PANTHER" id="PTHR22727:SF3">
    <property type="entry name" value="ENDOSOME_LYSOSOME-ASSOCIATED APOPTOSIS AND AUTOPHAGY REGULATOR FAMILY MEMBER 2"/>
    <property type="match status" value="1"/>
</dbReference>
<dbReference type="PANTHER" id="PTHR22727">
    <property type="entry name" value="PROTEIN CBG13728"/>
    <property type="match status" value="1"/>
</dbReference>
<dbReference type="Pfam" id="PF23089">
    <property type="entry name" value="ELAPOR1_C"/>
    <property type="match status" value="1"/>
</dbReference>
<dbReference type="Pfam" id="PF23031">
    <property type="entry name" value="GBD_ELAPOR1"/>
    <property type="match status" value="1"/>
</dbReference>
<dbReference type="Pfam" id="PF23032">
    <property type="entry name" value="GBD_ELAPOR1-like_3rd"/>
    <property type="match status" value="1"/>
</dbReference>
<dbReference type="Pfam" id="PF23087">
    <property type="entry name" value="MRH_ELAPOR1_9th"/>
    <property type="match status" value="1"/>
</dbReference>
<dbReference type="Pfam" id="PF23091">
    <property type="entry name" value="TNFR_ELAPOR1_6th"/>
    <property type="match status" value="1"/>
</dbReference>
<dbReference type="SMART" id="SM01411">
    <property type="entry name" value="Ephrin_rec_like"/>
    <property type="match status" value="3"/>
</dbReference>
<dbReference type="SUPFAM" id="SSF57184">
    <property type="entry name" value="Growth factor receptor domain"/>
    <property type="match status" value="2"/>
</dbReference>
<dbReference type="SUPFAM" id="SSF50911">
    <property type="entry name" value="Mannose 6-phosphate receptor domain"/>
    <property type="match status" value="1"/>
</dbReference>
<dbReference type="PROSITE" id="PS51914">
    <property type="entry name" value="MRH"/>
    <property type="match status" value="1"/>
</dbReference>
<organism>
    <name type="scientific">Mus musculus</name>
    <name type="common">Mouse</name>
    <dbReference type="NCBI Taxonomy" id="10090"/>
    <lineage>
        <taxon>Eukaryota</taxon>
        <taxon>Metazoa</taxon>
        <taxon>Chordata</taxon>
        <taxon>Craniata</taxon>
        <taxon>Vertebrata</taxon>
        <taxon>Euteleostomi</taxon>
        <taxon>Mammalia</taxon>
        <taxon>Eutheria</taxon>
        <taxon>Euarchontoglires</taxon>
        <taxon>Glires</taxon>
        <taxon>Rodentia</taxon>
        <taxon>Myomorpha</taxon>
        <taxon>Muroidea</taxon>
        <taxon>Muridae</taxon>
        <taxon>Murinae</taxon>
        <taxon>Mus</taxon>
        <taxon>Mus</taxon>
    </lineage>
</organism>
<comment type="function">
    <text evidence="6">Functions as a regulator of the BMP signaling pathway and may be involved in epidermal differentiation.</text>
</comment>
<comment type="subcellular location">
    <subcellularLocation>
        <location evidence="3">Cell membrane</location>
        <topology evidence="4">Single-pass type I membrane protein</topology>
    </subcellularLocation>
</comment>
<comment type="alternative products">
    <event type="alternative splicing"/>
    <isoform>
        <id>Q3UZV7-1</id>
        <name>1</name>
        <sequence type="displayed"/>
    </isoform>
    <isoform>
        <id>Q3UZV7-2</id>
        <name>2</name>
        <sequence type="described" ref="VSP_033539"/>
    </isoform>
    <isoform>
        <id>Q3UZV7-3</id>
        <name>3</name>
        <sequence type="described" ref="VSP_033531 VSP_033539"/>
    </isoform>
    <isoform>
        <id>Q3UZV7-4</id>
        <name>4</name>
        <sequence type="described" ref="VSP_033532 VSP_033535"/>
    </isoform>
    <isoform>
        <id>Q3UZV7-5</id>
        <name>5</name>
        <sequence type="described" ref="VSP_033531 VSP_033537 VSP_033538"/>
    </isoform>
    <isoform>
        <id>Q3UZV7-6</id>
        <name>6</name>
        <sequence type="described" ref="VSP_033533"/>
    </isoform>
    <isoform>
        <id>Q3UZV7-7</id>
        <name>7</name>
        <sequence type="described" ref="VSP_033534 VSP_033536"/>
    </isoform>
</comment>
<comment type="similarity">
    <text evidence="9">Belongs to the ELAPOR family.</text>
</comment>
<comment type="sequence caution" evidence="9">
    <conflict type="erroneous translation">
        <sequence resource="EMBL-CDS" id="BAC33441"/>
    </conflict>
    <text>Wrong choice of CDS.</text>
</comment>
<comment type="sequence caution" evidence="9">
    <conflict type="frameshift">
        <sequence resource="EMBL-CDS" id="BAC33441"/>
    </conflict>
</comment>
<name>ELAP2_MOUSE</name>
<gene>
    <name evidence="10" type="primary">Elapor2</name>
    <name evidence="8" type="synonym">Eig121l</name>
</gene>